<keyword id="KW-0687">Ribonucleoprotein</keyword>
<keyword id="KW-0689">Ribosomal protein</keyword>
<keyword id="KW-0694">RNA-binding</keyword>
<keyword id="KW-0699">rRNA-binding</keyword>
<evidence type="ECO:0000255" key="1">
    <source>
        <dbReference type="HAMAP-Rule" id="MF_01343"/>
    </source>
</evidence>
<evidence type="ECO:0000305" key="2"/>
<dbReference type="EMBL" id="CP001056">
    <property type="protein sequence ID" value="ACD22805.1"/>
    <property type="molecule type" value="Genomic_DNA"/>
</dbReference>
<dbReference type="SMR" id="B2TJ60"/>
<dbReference type="KEGG" id="cbk:CLL_A1278"/>
<dbReference type="PATRIC" id="fig|935198.13.peg.1224"/>
<dbReference type="HOGENOM" id="CLU_148518_0_0_9"/>
<dbReference type="Proteomes" id="UP000001195">
    <property type="component" value="Chromosome"/>
</dbReference>
<dbReference type="GO" id="GO:0022627">
    <property type="term" value="C:cytosolic small ribosomal subunit"/>
    <property type="evidence" value="ECO:0007669"/>
    <property type="project" value="TreeGrafter"/>
</dbReference>
<dbReference type="GO" id="GO:0019843">
    <property type="term" value="F:rRNA binding"/>
    <property type="evidence" value="ECO:0007669"/>
    <property type="project" value="UniProtKB-UniRule"/>
</dbReference>
<dbReference type="GO" id="GO:0003735">
    <property type="term" value="F:structural constituent of ribosome"/>
    <property type="evidence" value="ECO:0007669"/>
    <property type="project" value="InterPro"/>
</dbReference>
<dbReference type="GO" id="GO:0006412">
    <property type="term" value="P:translation"/>
    <property type="evidence" value="ECO:0007669"/>
    <property type="project" value="UniProtKB-UniRule"/>
</dbReference>
<dbReference type="CDD" id="cd00353">
    <property type="entry name" value="Ribosomal_S15p_S13e"/>
    <property type="match status" value="1"/>
</dbReference>
<dbReference type="FunFam" id="1.10.287.10:FF:000002">
    <property type="entry name" value="30S ribosomal protein S15"/>
    <property type="match status" value="1"/>
</dbReference>
<dbReference type="Gene3D" id="6.10.250.3130">
    <property type="match status" value="1"/>
</dbReference>
<dbReference type="Gene3D" id="1.10.287.10">
    <property type="entry name" value="S15/NS1, RNA-binding"/>
    <property type="match status" value="1"/>
</dbReference>
<dbReference type="HAMAP" id="MF_01343_B">
    <property type="entry name" value="Ribosomal_uS15_B"/>
    <property type="match status" value="1"/>
</dbReference>
<dbReference type="InterPro" id="IPR000589">
    <property type="entry name" value="Ribosomal_uS15"/>
</dbReference>
<dbReference type="InterPro" id="IPR005290">
    <property type="entry name" value="Ribosomal_uS15_bac-type"/>
</dbReference>
<dbReference type="InterPro" id="IPR009068">
    <property type="entry name" value="uS15_NS1_RNA-bd_sf"/>
</dbReference>
<dbReference type="NCBIfam" id="TIGR00952">
    <property type="entry name" value="S15_bact"/>
    <property type="match status" value="1"/>
</dbReference>
<dbReference type="PANTHER" id="PTHR23321">
    <property type="entry name" value="RIBOSOMAL PROTEIN S15, BACTERIAL AND ORGANELLAR"/>
    <property type="match status" value="1"/>
</dbReference>
<dbReference type="PANTHER" id="PTHR23321:SF26">
    <property type="entry name" value="SMALL RIBOSOMAL SUBUNIT PROTEIN US15M"/>
    <property type="match status" value="1"/>
</dbReference>
<dbReference type="Pfam" id="PF00312">
    <property type="entry name" value="Ribosomal_S15"/>
    <property type="match status" value="1"/>
</dbReference>
<dbReference type="SMART" id="SM01387">
    <property type="entry name" value="Ribosomal_S15"/>
    <property type="match status" value="1"/>
</dbReference>
<dbReference type="SUPFAM" id="SSF47060">
    <property type="entry name" value="S15/NS1 RNA-binding domain"/>
    <property type="match status" value="1"/>
</dbReference>
<dbReference type="PROSITE" id="PS00362">
    <property type="entry name" value="RIBOSOMAL_S15"/>
    <property type="match status" value="1"/>
</dbReference>
<sequence length="87" mass="10131">MDKARKLEIIKQYGRSEGDTGSPEVQIALLTERINSLTGHLKVHKKDHHSRRGLLMMVGHRRGLLNYLADQDIERYRTIIKQLGLRR</sequence>
<feature type="chain" id="PRO_0000354184" description="Small ribosomal subunit protein uS15">
    <location>
        <begin position="1"/>
        <end position="87"/>
    </location>
</feature>
<reference key="1">
    <citation type="submission" date="2008-04" db="EMBL/GenBank/DDBJ databases">
        <title>Complete sequence of Clostridium botulinum strain Eklund.</title>
        <authorList>
            <person name="Brinkac L.M."/>
            <person name="Brown J.L."/>
            <person name="Bruce D."/>
            <person name="Detter C."/>
            <person name="Munk C."/>
            <person name="Smith L.A."/>
            <person name="Smith T.J."/>
            <person name="Sutton G."/>
            <person name="Brettin T.S."/>
        </authorList>
    </citation>
    <scope>NUCLEOTIDE SEQUENCE [LARGE SCALE GENOMIC DNA]</scope>
    <source>
        <strain>Eklund 17B / Type B</strain>
    </source>
</reference>
<protein>
    <recommendedName>
        <fullName evidence="1">Small ribosomal subunit protein uS15</fullName>
    </recommendedName>
    <alternativeName>
        <fullName evidence="2">30S ribosomal protein S15</fullName>
    </alternativeName>
</protein>
<gene>
    <name evidence="1" type="primary">rpsO</name>
    <name type="ordered locus">CLL_A1278</name>
</gene>
<comment type="function">
    <text evidence="1">One of the primary rRNA binding proteins, it binds directly to 16S rRNA where it helps nucleate assembly of the platform of the 30S subunit by binding and bridging several RNA helices of the 16S rRNA.</text>
</comment>
<comment type="function">
    <text evidence="1">Forms an intersubunit bridge (bridge B4) with the 23S rRNA of the 50S subunit in the ribosome.</text>
</comment>
<comment type="subunit">
    <text evidence="1">Part of the 30S ribosomal subunit. Forms a bridge to the 50S subunit in the 70S ribosome, contacting the 23S rRNA.</text>
</comment>
<comment type="similarity">
    <text evidence="1">Belongs to the universal ribosomal protein uS15 family.</text>
</comment>
<name>RS15_CLOBB</name>
<proteinExistence type="inferred from homology"/>
<organism>
    <name type="scientific">Clostridium botulinum (strain Eklund 17B / Type B)</name>
    <dbReference type="NCBI Taxonomy" id="935198"/>
    <lineage>
        <taxon>Bacteria</taxon>
        <taxon>Bacillati</taxon>
        <taxon>Bacillota</taxon>
        <taxon>Clostridia</taxon>
        <taxon>Eubacteriales</taxon>
        <taxon>Clostridiaceae</taxon>
        <taxon>Clostridium</taxon>
    </lineage>
</organism>
<accession>B2TJ60</accession>